<accession>B2SRM7</accession>
<keyword id="KW-0963">Cytoplasm</keyword>
<keyword id="KW-0227">DNA damage</keyword>
<keyword id="KW-0234">DNA repair</keyword>
<keyword id="KW-0255">Endonuclease</keyword>
<keyword id="KW-0378">Hydrolase</keyword>
<keyword id="KW-0460">Magnesium</keyword>
<keyword id="KW-0479">Metal-binding</keyword>
<keyword id="KW-0540">Nuclease</keyword>
<evidence type="ECO:0000255" key="1">
    <source>
        <dbReference type="HAMAP-Rule" id="MF_00801"/>
    </source>
</evidence>
<reference key="1">
    <citation type="journal article" date="2008" name="BMC Genomics">
        <title>Genome sequence and rapid evolution of the rice pathogen Xanthomonas oryzae pv. oryzae PXO99A.</title>
        <authorList>
            <person name="Salzberg S.L."/>
            <person name="Sommer D.D."/>
            <person name="Schatz M.C."/>
            <person name="Phillippy A.M."/>
            <person name="Rabinowicz P.D."/>
            <person name="Tsuge S."/>
            <person name="Furutani A."/>
            <person name="Ochiai H."/>
            <person name="Delcher A.L."/>
            <person name="Kelley D."/>
            <person name="Madupu R."/>
            <person name="Puiu D."/>
            <person name="Radune D."/>
            <person name="Shumway M."/>
            <person name="Trapnell C."/>
            <person name="Aparna G."/>
            <person name="Jha G."/>
            <person name="Pandey A."/>
            <person name="Patil P.B."/>
            <person name="Ishihara H."/>
            <person name="Meyer D.F."/>
            <person name="Szurek B."/>
            <person name="Verdier V."/>
            <person name="Koebnik R."/>
            <person name="Dow J.M."/>
            <person name="Ryan R.P."/>
            <person name="Hirata H."/>
            <person name="Tsuyumu S."/>
            <person name="Won Lee S."/>
            <person name="Seo Y.-S."/>
            <person name="Sriariyanum M."/>
            <person name="Ronald P.C."/>
            <person name="Sonti R.V."/>
            <person name="Van Sluys M.-A."/>
            <person name="Leach J.E."/>
            <person name="White F.F."/>
            <person name="Bogdanove A.J."/>
        </authorList>
    </citation>
    <scope>NUCLEOTIDE SEQUENCE [LARGE SCALE GENOMIC DNA]</scope>
    <source>
        <strain>PXO99A</strain>
    </source>
</reference>
<proteinExistence type="inferred from homology"/>
<feature type="chain" id="PRO_1000133894" description="Endonuclease V">
    <location>
        <begin position="1"/>
        <end position="237"/>
    </location>
</feature>
<feature type="binding site" evidence="1">
    <location>
        <position position="46"/>
    </location>
    <ligand>
        <name>Mg(2+)</name>
        <dbReference type="ChEBI" id="CHEBI:18420"/>
    </ligand>
</feature>
<feature type="binding site" evidence="1">
    <location>
        <position position="114"/>
    </location>
    <ligand>
        <name>Mg(2+)</name>
        <dbReference type="ChEBI" id="CHEBI:18420"/>
    </ligand>
</feature>
<feature type="site" description="Interaction with target DNA" evidence="1">
    <location>
        <position position="84"/>
    </location>
</feature>
<name>NFI_XANOP</name>
<organism>
    <name type="scientific">Xanthomonas oryzae pv. oryzae (strain PXO99A)</name>
    <dbReference type="NCBI Taxonomy" id="360094"/>
    <lineage>
        <taxon>Bacteria</taxon>
        <taxon>Pseudomonadati</taxon>
        <taxon>Pseudomonadota</taxon>
        <taxon>Gammaproteobacteria</taxon>
        <taxon>Lysobacterales</taxon>
        <taxon>Lysobacteraceae</taxon>
        <taxon>Xanthomonas</taxon>
    </lineage>
</organism>
<sequence length="237" mass="25465">MHTNGPVFAGWDGSVIQAQQLQQQLAQRVLLHDEVSATPQLLAGFDVGFEDDGQSTRAAAVLLDAHTLLPLETHVARVPTSMPYVPGLLSFRELPALLQALALLSRTPDLVFIDGQGIAHPRRLGIAAHFGVVTGLPCIGIAKQRLAGSFAEPGPERGDHTPILLGGAQIGWALRSKPRCNPLIVSPGHRVSMQGALGWTLRTLRSYRLPEPTRLADRLASRRGKMPALAADTPLLF</sequence>
<dbReference type="EC" id="3.1.21.7" evidence="1"/>
<dbReference type="EMBL" id="CP000967">
    <property type="protein sequence ID" value="ACD57996.1"/>
    <property type="molecule type" value="Genomic_DNA"/>
</dbReference>
<dbReference type="RefSeq" id="WP_012444354.1">
    <property type="nucleotide sequence ID" value="NC_010717.2"/>
</dbReference>
<dbReference type="SMR" id="B2SRM7"/>
<dbReference type="KEGG" id="xop:PXO_04762"/>
<dbReference type="eggNOG" id="COG1515">
    <property type="taxonomic scope" value="Bacteria"/>
</dbReference>
<dbReference type="HOGENOM" id="CLU_047631_1_0_6"/>
<dbReference type="Proteomes" id="UP000001740">
    <property type="component" value="Chromosome"/>
</dbReference>
<dbReference type="GO" id="GO:0005737">
    <property type="term" value="C:cytoplasm"/>
    <property type="evidence" value="ECO:0007669"/>
    <property type="project" value="UniProtKB-SubCell"/>
</dbReference>
<dbReference type="GO" id="GO:0043737">
    <property type="term" value="F:deoxyribonuclease V activity"/>
    <property type="evidence" value="ECO:0007669"/>
    <property type="project" value="UniProtKB-UniRule"/>
</dbReference>
<dbReference type="GO" id="GO:0000287">
    <property type="term" value="F:magnesium ion binding"/>
    <property type="evidence" value="ECO:0007669"/>
    <property type="project" value="UniProtKB-UniRule"/>
</dbReference>
<dbReference type="GO" id="GO:0016891">
    <property type="term" value="F:RNA endonuclease activity, producing 5'-phosphomonoesters"/>
    <property type="evidence" value="ECO:0007669"/>
    <property type="project" value="TreeGrafter"/>
</dbReference>
<dbReference type="GO" id="GO:0003727">
    <property type="term" value="F:single-stranded RNA binding"/>
    <property type="evidence" value="ECO:0007669"/>
    <property type="project" value="TreeGrafter"/>
</dbReference>
<dbReference type="GO" id="GO:0006281">
    <property type="term" value="P:DNA repair"/>
    <property type="evidence" value="ECO:0007669"/>
    <property type="project" value="UniProtKB-UniRule"/>
</dbReference>
<dbReference type="CDD" id="cd06559">
    <property type="entry name" value="Endonuclease_V"/>
    <property type="match status" value="1"/>
</dbReference>
<dbReference type="FunFam" id="3.30.2170.10:FF:000001">
    <property type="entry name" value="Endonuclease V"/>
    <property type="match status" value="1"/>
</dbReference>
<dbReference type="Gene3D" id="3.30.2170.10">
    <property type="entry name" value="archaeoglobus fulgidus dsm 4304 superfamily"/>
    <property type="match status" value="1"/>
</dbReference>
<dbReference type="HAMAP" id="MF_00801">
    <property type="entry name" value="Endonuclease_5"/>
    <property type="match status" value="1"/>
</dbReference>
<dbReference type="InterPro" id="IPR007581">
    <property type="entry name" value="Endonuclease-V"/>
</dbReference>
<dbReference type="NCBIfam" id="NF008629">
    <property type="entry name" value="PRK11617.1"/>
    <property type="match status" value="1"/>
</dbReference>
<dbReference type="PANTHER" id="PTHR28511">
    <property type="entry name" value="ENDONUCLEASE V"/>
    <property type="match status" value="1"/>
</dbReference>
<dbReference type="PANTHER" id="PTHR28511:SF1">
    <property type="entry name" value="ENDONUCLEASE V"/>
    <property type="match status" value="1"/>
</dbReference>
<dbReference type="Pfam" id="PF04493">
    <property type="entry name" value="Endonuclease_5"/>
    <property type="match status" value="1"/>
</dbReference>
<gene>
    <name evidence="1" type="primary">nfi</name>
    <name type="ordered locus">PXO_04762</name>
</gene>
<protein>
    <recommendedName>
        <fullName evidence="1">Endonuclease V</fullName>
        <ecNumber evidence="1">3.1.21.7</ecNumber>
    </recommendedName>
    <alternativeName>
        <fullName evidence="1">Deoxyinosine 3'endonuclease</fullName>
    </alternativeName>
    <alternativeName>
        <fullName evidence="1">Deoxyribonuclease V</fullName>
        <shortName evidence="1">DNase V</shortName>
    </alternativeName>
</protein>
<comment type="function">
    <text evidence="1">DNA repair enzyme involved in the repair of deaminated bases. Selectively cleaves double-stranded DNA at the second phosphodiester bond 3' to a deoxyinosine leaving behind the intact lesion on the nicked DNA.</text>
</comment>
<comment type="catalytic activity">
    <reaction evidence="1">
        <text>Endonucleolytic cleavage at apurinic or apyrimidinic sites to products with a 5'-phosphate.</text>
        <dbReference type="EC" id="3.1.21.7"/>
    </reaction>
</comment>
<comment type="cofactor">
    <cofactor evidence="1">
        <name>Mg(2+)</name>
        <dbReference type="ChEBI" id="CHEBI:18420"/>
    </cofactor>
</comment>
<comment type="subcellular location">
    <subcellularLocation>
        <location evidence="1">Cytoplasm</location>
    </subcellularLocation>
</comment>
<comment type="similarity">
    <text evidence="1">Belongs to the endonuclease V family.</text>
</comment>